<evidence type="ECO:0000255" key="1">
    <source>
        <dbReference type="HAMAP-Rule" id="MF_01105"/>
    </source>
</evidence>
<comment type="catalytic activity">
    <reaction evidence="1">
        <text>L-glutamate + acetyl-CoA = N-acetyl-L-glutamate + CoA + H(+)</text>
        <dbReference type="Rhea" id="RHEA:24292"/>
        <dbReference type="ChEBI" id="CHEBI:15378"/>
        <dbReference type="ChEBI" id="CHEBI:29985"/>
        <dbReference type="ChEBI" id="CHEBI:44337"/>
        <dbReference type="ChEBI" id="CHEBI:57287"/>
        <dbReference type="ChEBI" id="CHEBI:57288"/>
        <dbReference type="EC" id="2.3.1.1"/>
    </reaction>
</comment>
<comment type="pathway">
    <text evidence="1">Amino-acid biosynthesis; L-arginine biosynthesis; N(2)-acetyl-L-ornithine from L-glutamate: step 1/4.</text>
</comment>
<comment type="subcellular location">
    <subcellularLocation>
        <location evidence="1">Cytoplasm</location>
    </subcellularLocation>
</comment>
<comment type="similarity">
    <text evidence="1">Belongs to the acetyltransferase family. ArgA subfamily.</text>
</comment>
<accession>A4XP61</accession>
<reference key="1">
    <citation type="submission" date="2007-04" db="EMBL/GenBank/DDBJ databases">
        <title>Complete sequence of Pseudomonas mendocina ymp.</title>
        <authorList>
            <consortium name="US DOE Joint Genome Institute"/>
            <person name="Copeland A."/>
            <person name="Lucas S."/>
            <person name="Lapidus A."/>
            <person name="Barry K."/>
            <person name="Glavina del Rio T."/>
            <person name="Dalin E."/>
            <person name="Tice H."/>
            <person name="Pitluck S."/>
            <person name="Kiss H."/>
            <person name="Brettin T."/>
            <person name="Detter J.C."/>
            <person name="Bruce D."/>
            <person name="Han C."/>
            <person name="Schmutz J."/>
            <person name="Larimer F."/>
            <person name="Land M."/>
            <person name="Hauser L."/>
            <person name="Kyrpides N."/>
            <person name="Mikhailova N."/>
            <person name="Hersman L."/>
            <person name="Dubois J."/>
            <person name="Maurice P."/>
            <person name="Richardson P."/>
        </authorList>
    </citation>
    <scope>NUCLEOTIDE SEQUENCE [LARGE SCALE GENOMIC DNA]</scope>
    <source>
        <strain>ymp</strain>
    </source>
</reference>
<name>ARGA_ECTM1</name>
<feature type="chain" id="PRO_1000084818" description="Amino-acid acetyltransferase">
    <location>
        <begin position="1"/>
        <end position="432"/>
    </location>
</feature>
<feature type="domain" description="N-acetyltransferase" evidence="1">
    <location>
        <begin position="286"/>
        <end position="425"/>
    </location>
</feature>
<gene>
    <name evidence="1" type="primary">argA</name>
    <name type="ordered locus">Pmen_0354</name>
</gene>
<organism>
    <name type="scientific">Ectopseudomonas mendocina (strain ymp)</name>
    <name type="common">Pseudomonas mendocina</name>
    <dbReference type="NCBI Taxonomy" id="399739"/>
    <lineage>
        <taxon>Bacteria</taxon>
        <taxon>Pseudomonadati</taxon>
        <taxon>Pseudomonadota</taxon>
        <taxon>Gammaproteobacteria</taxon>
        <taxon>Pseudomonadales</taxon>
        <taxon>Pseudomonadaceae</taxon>
        <taxon>Ectopseudomonas</taxon>
    </lineage>
</organism>
<protein>
    <recommendedName>
        <fullName evidence="1">Amino-acid acetyltransferase</fullName>
        <ecNumber evidence="1">2.3.1.1</ecNumber>
    </recommendedName>
    <alternativeName>
        <fullName evidence="1">N-acetylglutamate synthase</fullName>
        <shortName evidence="1">AGS</shortName>
        <shortName evidence="1">NAGS</shortName>
    </alternativeName>
</protein>
<dbReference type="EC" id="2.3.1.1" evidence="1"/>
<dbReference type="EMBL" id="CP000680">
    <property type="protein sequence ID" value="ABP83127.1"/>
    <property type="molecule type" value="Genomic_DNA"/>
</dbReference>
<dbReference type="SMR" id="A4XP61"/>
<dbReference type="STRING" id="399739.Pmen_0354"/>
<dbReference type="KEGG" id="pmy:Pmen_0354"/>
<dbReference type="PATRIC" id="fig|399739.8.peg.363"/>
<dbReference type="eggNOG" id="COG0548">
    <property type="taxonomic scope" value="Bacteria"/>
</dbReference>
<dbReference type="eggNOG" id="COG1246">
    <property type="taxonomic scope" value="Bacteria"/>
</dbReference>
<dbReference type="HOGENOM" id="CLU_024773_0_0_6"/>
<dbReference type="OrthoDB" id="9802238at2"/>
<dbReference type="UniPathway" id="UPA00068">
    <property type="reaction ID" value="UER00106"/>
</dbReference>
<dbReference type="GO" id="GO:0005737">
    <property type="term" value="C:cytoplasm"/>
    <property type="evidence" value="ECO:0007669"/>
    <property type="project" value="UniProtKB-SubCell"/>
</dbReference>
<dbReference type="GO" id="GO:0004042">
    <property type="term" value="F:L-glutamate N-acetyltransferase activity"/>
    <property type="evidence" value="ECO:0007669"/>
    <property type="project" value="UniProtKB-UniRule"/>
</dbReference>
<dbReference type="GO" id="GO:0006526">
    <property type="term" value="P:L-arginine biosynthetic process"/>
    <property type="evidence" value="ECO:0007669"/>
    <property type="project" value="UniProtKB-UniRule"/>
</dbReference>
<dbReference type="CDD" id="cd04237">
    <property type="entry name" value="AAK_NAGS-ABP"/>
    <property type="match status" value="1"/>
</dbReference>
<dbReference type="CDD" id="cd04301">
    <property type="entry name" value="NAT_SF"/>
    <property type="match status" value="1"/>
</dbReference>
<dbReference type="Gene3D" id="3.40.630.30">
    <property type="match status" value="1"/>
</dbReference>
<dbReference type="Gene3D" id="3.40.1160.10">
    <property type="entry name" value="Acetylglutamate kinase-like"/>
    <property type="match status" value="1"/>
</dbReference>
<dbReference type="HAMAP" id="MF_01105">
    <property type="entry name" value="N_acetyl_glu_synth"/>
    <property type="match status" value="1"/>
</dbReference>
<dbReference type="InterPro" id="IPR036393">
    <property type="entry name" value="AceGlu_kinase-like_sf"/>
</dbReference>
<dbReference type="InterPro" id="IPR016181">
    <property type="entry name" value="Acyl_CoA_acyltransferase"/>
</dbReference>
<dbReference type="InterPro" id="IPR001048">
    <property type="entry name" value="Asp/Glu/Uridylate_kinase"/>
</dbReference>
<dbReference type="InterPro" id="IPR000182">
    <property type="entry name" value="GNAT_dom"/>
</dbReference>
<dbReference type="InterPro" id="IPR033719">
    <property type="entry name" value="NAGS_kin"/>
</dbReference>
<dbReference type="InterPro" id="IPR010167">
    <property type="entry name" value="NH2A_AcTrfase"/>
</dbReference>
<dbReference type="NCBIfam" id="TIGR01890">
    <property type="entry name" value="N-Ac-Glu-synth"/>
    <property type="match status" value="1"/>
</dbReference>
<dbReference type="NCBIfam" id="NF003641">
    <property type="entry name" value="PRK05279.1"/>
    <property type="match status" value="1"/>
</dbReference>
<dbReference type="PANTHER" id="PTHR30602">
    <property type="entry name" value="AMINO-ACID ACETYLTRANSFERASE"/>
    <property type="match status" value="1"/>
</dbReference>
<dbReference type="PANTHER" id="PTHR30602:SF12">
    <property type="entry name" value="AMINO-ACID ACETYLTRANSFERASE NAGS1, CHLOROPLASTIC-RELATED"/>
    <property type="match status" value="1"/>
</dbReference>
<dbReference type="Pfam" id="PF00696">
    <property type="entry name" value="AA_kinase"/>
    <property type="match status" value="1"/>
</dbReference>
<dbReference type="Pfam" id="PF00583">
    <property type="entry name" value="Acetyltransf_1"/>
    <property type="match status" value="1"/>
</dbReference>
<dbReference type="PIRSF" id="PIRSF000423">
    <property type="entry name" value="ArgA"/>
    <property type="match status" value="1"/>
</dbReference>
<dbReference type="SUPFAM" id="SSF55729">
    <property type="entry name" value="Acyl-CoA N-acyltransferases (Nat)"/>
    <property type="match status" value="1"/>
</dbReference>
<dbReference type="SUPFAM" id="SSF53633">
    <property type="entry name" value="Carbamate kinase-like"/>
    <property type="match status" value="1"/>
</dbReference>
<dbReference type="PROSITE" id="PS51186">
    <property type="entry name" value="GNAT"/>
    <property type="match status" value="1"/>
</dbReference>
<sequence>MHDYVTWLRHASPYINAHRDRTFVVMLPGEGIAHPNFANIVHDLVLLHSLGVRLVLVHGSRPQIEARLAARGLTPHFHRDLRITDAPTLECVIDAVGQLRIAIEARLSMDMAASPMQGSRLRLTSGNFVTARPIGVLDGVDYHHTGEVRRIDRKGINRQLDERSIVLLSPLGYSPTGEIFNLACEDVATRAAIDLGADKLLLFGAEDGLLDEHGQLVRELRPQQVPAHLARLGSNYQGELLDAAAQACRGGVGRSHIVSYATDGALLSELFTRTGNGTLVAQEQFESLREATIEDVGGLIELISPLEEQGILVRRSREVLEREIEQFSIVEREGLIIACAALYPIADSDCGELACLAVNPDYRHGGRGDELLARIEARARAQGLKTLFVLTTRTAHWFRERGFEPSSVERMPAARASLYNYQRNSKVFEKAL</sequence>
<proteinExistence type="inferred from homology"/>
<keyword id="KW-0012">Acyltransferase</keyword>
<keyword id="KW-0028">Amino-acid biosynthesis</keyword>
<keyword id="KW-0055">Arginine biosynthesis</keyword>
<keyword id="KW-0963">Cytoplasm</keyword>
<keyword id="KW-0808">Transferase</keyword>